<evidence type="ECO:0000255" key="1">
    <source>
        <dbReference type="HAMAP-Rule" id="MF_00661"/>
    </source>
</evidence>
<evidence type="ECO:0000256" key="2">
    <source>
        <dbReference type="SAM" id="MobiDB-lite"/>
    </source>
</evidence>
<feature type="chain" id="PRO_1000082870" description="ATP-dependent RNA helicase RhlB">
    <location>
        <begin position="1"/>
        <end position="439"/>
    </location>
</feature>
<feature type="domain" description="Helicase ATP-binding" evidence="1">
    <location>
        <begin position="40"/>
        <end position="219"/>
    </location>
</feature>
<feature type="domain" description="Helicase C-terminal" evidence="1">
    <location>
        <begin position="243"/>
        <end position="390"/>
    </location>
</feature>
<feature type="region of interest" description="Disordered" evidence="2">
    <location>
        <begin position="398"/>
        <end position="439"/>
    </location>
</feature>
<feature type="short sequence motif" description="Q motif">
    <location>
        <begin position="9"/>
        <end position="37"/>
    </location>
</feature>
<feature type="short sequence motif" description="DEAD box">
    <location>
        <begin position="165"/>
        <end position="168"/>
    </location>
</feature>
<feature type="compositionally biased region" description="Basic residues" evidence="2">
    <location>
        <begin position="425"/>
        <end position="439"/>
    </location>
</feature>
<feature type="binding site" evidence="1">
    <location>
        <begin position="53"/>
        <end position="60"/>
    </location>
    <ligand>
        <name>ATP</name>
        <dbReference type="ChEBI" id="CHEBI:30616"/>
    </ligand>
</feature>
<accession>A1RFB3</accession>
<protein>
    <recommendedName>
        <fullName evidence="1">ATP-dependent RNA helicase RhlB</fullName>
        <ecNumber evidence="1">3.6.4.13</ecNumber>
    </recommendedName>
</protein>
<proteinExistence type="inferred from homology"/>
<sequence length="439" mass="49052">MSETHLSTQKFADLPLHPEVKQALAENGFEFCTPIQALSLPVLLQSKDIAGQAQTGTGKTMAFLVATFNHLLSTPIPEGRQINQPRAIIMAPTRELAIQIAKDAILLAKHTRLKVGIVYGGESYDVQRKVLDQGVDILIGTTGRIIDYVRQGIISLTAIQAVVLDEADRMFDLGFIKDIRFLFRRMPDANQRLNMLFSATLSMKVQELAYDHMNDPVKVDIAPDEKTSKNIKEEVFYPSQEDKMRLLLTLIEEDWPEKAIVFSNTKHSCENLWSWLEGDGHRVGLLTGDVPQKKRIRILEQFTSGQLDILVATDVAARGLHISDVSHVYNYDLPDDCEDYVHRIGRTGRAGNKGVSISFACEEYALNLPAIESYINHSIPVSNYDSSALLEDIPAPVKIPRKHPAGTRNLRERAGAGRPQGAHRSGGRPPRHDRTRRHS</sequence>
<gene>
    <name evidence="1" type="primary">rhlB</name>
    <name type="ordered locus">Sputw3181_0507</name>
</gene>
<reference key="1">
    <citation type="submission" date="2006-12" db="EMBL/GenBank/DDBJ databases">
        <title>Complete sequence of Shewanella sp. W3-18-1.</title>
        <authorList>
            <consortium name="US DOE Joint Genome Institute"/>
            <person name="Copeland A."/>
            <person name="Lucas S."/>
            <person name="Lapidus A."/>
            <person name="Barry K."/>
            <person name="Detter J.C."/>
            <person name="Glavina del Rio T."/>
            <person name="Hammon N."/>
            <person name="Israni S."/>
            <person name="Dalin E."/>
            <person name="Tice H."/>
            <person name="Pitluck S."/>
            <person name="Chain P."/>
            <person name="Malfatti S."/>
            <person name="Shin M."/>
            <person name="Vergez L."/>
            <person name="Schmutz J."/>
            <person name="Larimer F."/>
            <person name="Land M."/>
            <person name="Hauser L."/>
            <person name="Kyrpides N."/>
            <person name="Lykidis A."/>
            <person name="Tiedje J."/>
            <person name="Richardson P."/>
        </authorList>
    </citation>
    <scope>NUCLEOTIDE SEQUENCE [LARGE SCALE GENOMIC DNA]</scope>
    <source>
        <strain>W3-18-1</strain>
    </source>
</reference>
<organism>
    <name type="scientific">Shewanella sp. (strain W3-18-1)</name>
    <dbReference type="NCBI Taxonomy" id="351745"/>
    <lineage>
        <taxon>Bacteria</taxon>
        <taxon>Pseudomonadati</taxon>
        <taxon>Pseudomonadota</taxon>
        <taxon>Gammaproteobacteria</taxon>
        <taxon>Alteromonadales</taxon>
        <taxon>Shewanellaceae</taxon>
        <taxon>Shewanella</taxon>
    </lineage>
</organism>
<keyword id="KW-0067">ATP-binding</keyword>
<keyword id="KW-0963">Cytoplasm</keyword>
<keyword id="KW-0347">Helicase</keyword>
<keyword id="KW-0378">Hydrolase</keyword>
<keyword id="KW-0547">Nucleotide-binding</keyword>
<keyword id="KW-0694">RNA-binding</keyword>
<dbReference type="EC" id="3.6.4.13" evidence="1"/>
<dbReference type="EMBL" id="CP000503">
    <property type="protein sequence ID" value="ABM23358.1"/>
    <property type="molecule type" value="Genomic_DNA"/>
</dbReference>
<dbReference type="RefSeq" id="WP_011787894.1">
    <property type="nucleotide sequence ID" value="NC_008750.1"/>
</dbReference>
<dbReference type="SMR" id="A1RFB3"/>
<dbReference type="GeneID" id="67445008"/>
<dbReference type="KEGG" id="shw:Sputw3181_0507"/>
<dbReference type="HOGENOM" id="CLU_003041_1_3_6"/>
<dbReference type="Proteomes" id="UP000002597">
    <property type="component" value="Chromosome"/>
</dbReference>
<dbReference type="GO" id="GO:0005829">
    <property type="term" value="C:cytosol"/>
    <property type="evidence" value="ECO:0007669"/>
    <property type="project" value="TreeGrafter"/>
</dbReference>
<dbReference type="GO" id="GO:0005524">
    <property type="term" value="F:ATP binding"/>
    <property type="evidence" value="ECO:0007669"/>
    <property type="project" value="UniProtKB-UniRule"/>
</dbReference>
<dbReference type="GO" id="GO:0016887">
    <property type="term" value="F:ATP hydrolysis activity"/>
    <property type="evidence" value="ECO:0007669"/>
    <property type="project" value="RHEA"/>
</dbReference>
<dbReference type="GO" id="GO:0003723">
    <property type="term" value="F:RNA binding"/>
    <property type="evidence" value="ECO:0007669"/>
    <property type="project" value="UniProtKB-UniRule"/>
</dbReference>
<dbReference type="GO" id="GO:0003724">
    <property type="term" value="F:RNA helicase activity"/>
    <property type="evidence" value="ECO:0007669"/>
    <property type="project" value="UniProtKB-UniRule"/>
</dbReference>
<dbReference type="GO" id="GO:0006401">
    <property type="term" value="P:RNA catabolic process"/>
    <property type="evidence" value="ECO:0007669"/>
    <property type="project" value="UniProtKB-UniRule"/>
</dbReference>
<dbReference type="CDD" id="cd00268">
    <property type="entry name" value="DEADc"/>
    <property type="match status" value="1"/>
</dbReference>
<dbReference type="CDD" id="cd18787">
    <property type="entry name" value="SF2_C_DEAD"/>
    <property type="match status" value="1"/>
</dbReference>
<dbReference type="FunFam" id="3.40.50.300:FF:000008">
    <property type="entry name" value="ATP-dependent RNA helicase RhlB"/>
    <property type="match status" value="1"/>
</dbReference>
<dbReference type="FunFam" id="3.40.50.300:FF:000312">
    <property type="entry name" value="ATP-dependent RNA helicase RhlB"/>
    <property type="match status" value="1"/>
</dbReference>
<dbReference type="Gene3D" id="3.40.50.300">
    <property type="entry name" value="P-loop containing nucleotide triphosphate hydrolases"/>
    <property type="match status" value="2"/>
</dbReference>
<dbReference type="HAMAP" id="MF_00661">
    <property type="entry name" value="DEAD_helicase_RhlB"/>
    <property type="match status" value="1"/>
</dbReference>
<dbReference type="InterPro" id="IPR011545">
    <property type="entry name" value="DEAD/DEAH_box_helicase_dom"/>
</dbReference>
<dbReference type="InterPro" id="IPR050079">
    <property type="entry name" value="DEAD_box_RNA_helicase"/>
</dbReference>
<dbReference type="InterPro" id="IPR014001">
    <property type="entry name" value="Helicase_ATP-bd"/>
</dbReference>
<dbReference type="InterPro" id="IPR001650">
    <property type="entry name" value="Helicase_C-like"/>
</dbReference>
<dbReference type="InterPro" id="IPR027417">
    <property type="entry name" value="P-loop_NTPase"/>
</dbReference>
<dbReference type="InterPro" id="IPR000629">
    <property type="entry name" value="RNA-helicase_DEAD-box_CS"/>
</dbReference>
<dbReference type="InterPro" id="IPR023554">
    <property type="entry name" value="RNA_helicase_ATP-dep_RhlB"/>
</dbReference>
<dbReference type="InterPro" id="IPR014014">
    <property type="entry name" value="RNA_helicase_DEAD_Q_motif"/>
</dbReference>
<dbReference type="NCBIfam" id="NF003419">
    <property type="entry name" value="PRK04837.1"/>
    <property type="match status" value="1"/>
</dbReference>
<dbReference type="PANTHER" id="PTHR47959:SF10">
    <property type="entry name" value="ATP-DEPENDENT RNA HELICASE RHLB"/>
    <property type="match status" value="1"/>
</dbReference>
<dbReference type="PANTHER" id="PTHR47959">
    <property type="entry name" value="ATP-DEPENDENT RNA HELICASE RHLE-RELATED"/>
    <property type="match status" value="1"/>
</dbReference>
<dbReference type="Pfam" id="PF00270">
    <property type="entry name" value="DEAD"/>
    <property type="match status" value="1"/>
</dbReference>
<dbReference type="Pfam" id="PF00271">
    <property type="entry name" value="Helicase_C"/>
    <property type="match status" value="1"/>
</dbReference>
<dbReference type="SMART" id="SM00487">
    <property type="entry name" value="DEXDc"/>
    <property type="match status" value="1"/>
</dbReference>
<dbReference type="SMART" id="SM00490">
    <property type="entry name" value="HELICc"/>
    <property type="match status" value="1"/>
</dbReference>
<dbReference type="SUPFAM" id="SSF52540">
    <property type="entry name" value="P-loop containing nucleoside triphosphate hydrolases"/>
    <property type="match status" value="1"/>
</dbReference>
<dbReference type="PROSITE" id="PS00039">
    <property type="entry name" value="DEAD_ATP_HELICASE"/>
    <property type="match status" value="1"/>
</dbReference>
<dbReference type="PROSITE" id="PS51192">
    <property type="entry name" value="HELICASE_ATP_BIND_1"/>
    <property type="match status" value="1"/>
</dbReference>
<dbReference type="PROSITE" id="PS51194">
    <property type="entry name" value="HELICASE_CTER"/>
    <property type="match status" value="1"/>
</dbReference>
<dbReference type="PROSITE" id="PS51195">
    <property type="entry name" value="Q_MOTIF"/>
    <property type="match status" value="1"/>
</dbReference>
<name>RHLB_SHESW</name>
<comment type="function">
    <text evidence="1">DEAD-box RNA helicase involved in RNA degradation. Has RNA-dependent ATPase activity and unwinds double-stranded RNA.</text>
</comment>
<comment type="catalytic activity">
    <reaction evidence="1">
        <text>ATP + H2O = ADP + phosphate + H(+)</text>
        <dbReference type="Rhea" id="RHEA:13065"/>
        <dbReference type="ChEBI" id="CHEBI:15377"/>
        <dbReference type="ChEBI" id="CHEBI:15378"/>
        <dbReference type="ChEBI" id="CHEBI:30616"/>
        <dbReference type="ChEBI" id="CHEBI:43474"/>
        <dbReference type="ChEBI" id="CHEBI:456216"/>
        <dbReference type="EC" id="3.6.4.13"/>
    </reaction>
</comment>
<comment type="subunit">
    <text evidence="1">Component of the RNA degradosome, which is a multiprotein complex involved in RNA processing and mRNA degradation.</text>
</comment>
<comment type="subcellular location">
    <subcellularLocation>
        <location evidence="1">Cytoplasm</location>
    </subcellularLocation>
</comment>
<comment type="similarity">
    <text evidence="1">Belongs to the DEAD box helicase family. RhlB subfamily.</text>
</comment>